<proteinExistence type="inferred from homology"/>
<sequence length="463" mass="51127">MGSKSPEGHWQAPHASNSNELKPANPDPQTSQNGSGSADLDRGVIGDDDDDDEDAEENGVNTETPNVEKKKKRKKSNKKKKKKTKSGTLSVTELKQTSPPRVLVSTLFPSEYPVGELVPYDCTTRTTDEESRYNSRLWDDDFLPDYRQAAEIHRQVRQYAQKELIKPGATLLSIAEGIEDGVRALSGHQGLEPGDFFKAGMGFPTGLCLNHIAAHWTPNPREKDVILDKGDVLKVDFGVHVNGRIVDSAFTVAFDDKYDNLLTAVREATNTGIKHAGVDARMSDIGAAIQEVMESYEVEIDGKVFPVKAIRNITGHDILRYHIHGGKQIPFIKNNNQDKMEEGEVYAIETFGSTGRGFLDDDVGVYGYGRNENMSGANLRLSSAKSLLKTIDANFGSIVFSRRYLERLGVKNYLLGMKNLVDNGIVECYSPLVDVKGSYTAQFEHTILLHSGGKEVISRGDDY</sequence>
<accession>A1CYM1</accession>
<comment type="function">
    <text evidence="1">Cotranslationally removes the N-terminal methionine from nascent proteins. The N-terminal methionine is often cleaved when the second residue in the primary sequence is small and uncharged (Met-Ala-, Cys, Gly, Pro, Ser, Thr, or Val).</text>
</comment>
<comment type="catalytic activity">
    <reaction evidence="1">
        <text>Release of N-terminal amino acids, preferentially methionine, from peptides and arylamides.</text>
        <dbReference type="EC" id="3.4.11.18"/>
    </reaction>
</comment>
<comment type="cofactor">
    <cofactor evidence="1">
        <name>Co(2+)</name>
        <dbReference type="ChEBI" id="CHEBI:48828"/>
    </cofactor>
    <cofactor evidence="1">
        <name>Zn(2+)</name>
        <dbReference type="ChEBI" id="CHEBI:29105"/>
    </cofactor>
    <cofactor evidence="1">
        <name>Mn(2+)</name>
        <dbReference type="ChEBI" id="CHEBI:29035"/>
    </cofactor>
    <cofactor evidence="1">
        <name>Fe(2+)</name>
        <dbReference type="ChEBI" id="CHEBI:29033"/>
    </cofactor>
    <text evidence="1">Binds 2 divalent metal cations per subunit. Has a high-affinity and a low affinity metal-binding site. The true nature of the physiological cofactor is under debate. The enzyme is active with cobalt, zinc, manganese or divalent iron ions. Most likely, methionine aminopeptidases function as mononuclear Fe(2+)-metalloproteases under physiological conditions, and the catalytically relevant metal-binding site has been assigned to the histidine-containing high-affinity site.</text>
</comment>
<comment type="subcellular location">
    <subcellularLocation>
        <location evidence="1">Cytoplasm</location>
    </subcellularLocation>
</comment>
<comment type="similarity">
    <text evidence="1">Belongs to the peptidase M24A family. Methionine aminopeptidase eukaryotic type 2 subfamily.</text>
</comment>
<protein>
    <recommendedName>
        <fullName evidence="1">Methionine aminopeptidase 2-2</fullName>
        <shortName evidence="1">MAP 2-2</shortName>
        <shortName evidence="1">MetAP 2-2</shortName>
        <ecNumber evidence="1">3.4.11.18</ecNumber>
    </recommendedName>
    <alternativeName>
        <fullName evidence="1">Peptidase M</fullName>
    </alternativeName>
</protein>
<reference key="1">
    <citation type="journal article" date="2008" name="PLoS Genet.">
        <title>Genomic islands in the pathogenic filamentous fungus Aspergillus fumigatus.</title>
        <authorList>
            <person name="Fedorova N.D."/>
            <person name="Khaldi N."/>
            <person name="Joardar V.S."/>
            <person name="Maiti R."/>
            <person name="Amedeo P."/>
            <person name="Anderson M.J."/>
            <person name="Crabtree J."/>
            <person name="Silva J.C."/>
            <person name="Badger J.H."/>
            <person name="Albarraq A."/>
            <person name="Angiuoli S."/>
            <person name="Bussey H."/>
            <person name="Bowyer P."/>
            <person name="Cotty P.J."/>
            <person name="Dyer P.S."/>
            <person name="Egan A."/>
            <person name="Galens K."/>
            <person name="Fraser-Liggett C.M."/>
            <person name="Haas B.J."/>
            <person name="Inman J.M."/>
            <person name="Kent R."/>
            <person name="Lemieux S."/>
            <person name="Malavazi I."/>
            <person name="Orvis J."/>
            <person name="Roemer T."/>
            <person name="Ronning C.M."/>
            <person name="Sundaram J.P."/>
            <person name="Sutton G."/>
            <person name="Turner G."/>
            <person name="Venter J.C."/>
            <person name="White O.R."/>
            <person name="Whitty B.R."/>
            <person name="Youngman P."/>
            <person name="Wolfe K.H."/>
            <person name="Goldman G.H."/>
            <person name="Wortman J.R."/>
            <person name="Jiang B."/>
            <person name="Denning D.W."/>
            <person name="Nierman W.C."/>
        </authorList>
    </citation>
    <scope>NUCLEOTIDE SEQUENCE [LARGE SCALE GENOMIC DNA]</scope>
    <source>
        <strain>ATCC 1020 / DSM 3700 / CBS 544.65 / FGSC A1164 / JCM 1740 / NRRL 181 / WB 181</strain>
    </source>
</reference>
<keyword id="KW-0031">Aminopeptidase</keyword>
<keyword id="KW-0963">Cytoplasm</keyword>
<keyword id="KW-0378">Hydrolase</keyword>
<keyword id="KW-0479">Metal-binding</keyword>
<keyword id="KW-0645">Protease</keyword>
<keyword id="KW-1185">Reference proteome</keyword>
<gene>
    <name type="ORF">NFIA_034070</name>
</gene>
<organism>
    <name type="scientific">Neosartorya fischeri (strain ATCC 1020 / DSM 3700 / CBS 544.65 / FGSC A1164 / JCM 1740 / NRRL 181 / WB 181)</name>
    <name type="common">Aspergillus fischerianus</name>
    <dbReference type="NCBI Taxonomy" id="331117"/>
    <lineage>
        <taxon>Eukaryota</taxon>
        <taxon>Fungi</taxon>
        <taxon>Dikarya</taxon>
        <taxon>Ascomycota</taxon>
        <taxon>Pezizomycotina</taxon>
        <taxon>Eurotiomycetes</taxon>
        <taxon>Eurotiomycetidae</taxon>
        <taxon>Eurotiales</taxon>
        <taxon>Aspergillaceae</taxon>
        <taxon>Aspergillus</taxon>
        <taxon>Aspergillus subgen. Fumigati</taxon>
    </lineage>
</organism>
<dbReference type="EC" id="3.4.11.18" evidence="1"/>
<dbReference type="EMBL" id="DS027686">
    <property type="protein sequence ID" value="EAW23841.1"/>
    <property type="molecule type" value="Genomic_DNA"/>
</dbReference>
<dbReference type="RefSeq" id="XP_001265738.1">
    <property type="nucleotide sequence ID" value="XM_001265737.1"/>
</dbReference>
<dbReference type="SMR" id="A1CYM1"/>
<dbReference type="STRING" id="331117.A1CYM1"/>
<dbReference type="MEROPS" id="M24.A02"/>
<dbReference type="EnsemblFungi" id="EAW23841">
    <property type="protein sequence ID" value="EAW23841"/>
    <property type="gene ID" value="NFIA_034070"/>
</dbReference>
<dbReference type="GeneID" id="4592397"/>
<dbReference type="KEGG" id="nfi:NFIA_034070"/>
<dbReference type="VEuPathDB" id="FungiDB:NFIA_034070"/>
<dbReference type="eggNOG" id="KOG2775">
    <property type="taxonomic scope" value="Eukaryota"/>
</dbReference>
<dbReference type="HOGENOM" id="CLU_015857_7_1_1"/>
<dbReference type="OMA" id="ILRYHIH"/>
<dbReference type="OrthoDB" id="7848262at2759"/>
<dbReference type="Proteomes" id="UP000006702">
    <property type="component" value="Unassembled WGS sequence"/>
</dbReference>
<dbReference type="GO" id="GO:0005737">
    <property type="term" value="C:cytoplasm"/>
    <property type="evidence" value="ECO:0007669"/>
    <property type="project" value="UniProtKB-SubCell"/>
</dbReference>
<dbReference type="GO" id="GO:0004239">
    <property type="term" value="F:initiator methionyl aminopeptidase activity"/>
    <property type="evidence" value="ECO:0007669"/>
    <property type="project" value="UniProtKB-UniRule"/>
</dbReference>
<dbReference type="GO" id="GO:0046872">
    <property type="term" value="F:metal ion binding"/>
    <property type="evidence" value="ECO:0007669"/>
    <property type="project" value="UniProtKB-UniRule"/>
</dbReference>
<dbReference type="GO" id="GO:0070006">
    <property type="term" value="F:metalloaminopeptidase activity"/>
    <property type="evidence" value="ECO:0007669"/>
    <property type="project" value="UniProtKB-UniRule"/>
</dbReference>
<dbReference type="GO" id="GO:0006508">
    <property type="term" value="P:proteolysis"/>
    <property type="evidence" value="ECO:0007669"/>
    <property type="project" value="UniProtKB-KW"/>
</dbReference>
<dbReference type="CDD" id="cd01088">
    <property type="entry name" value="MetAP2"/>
    <property type="match status" value="1"/>
</dbReference>
<dbReference type="Gene3D" id="3.90.230.10">
    <property type="entry name" value="Creatinase/methionine aminopeptidase superfamily"/>
    <property type="match status" value="1"/>
</dbReference>
<dbReference type="Gene3D" id="1.10.10.10">
    <property type="entry name" value="Winged helix-like DNA-binding domain superfamily/Winged helix DNA-binding domain"/>
    <property type="match status" value="1"/>
</dbReference>
<dbReference type="HAMAP" id="MF_03175">
    <property type="entry name" value="MetAP_2_euk"/>
    <property type="match status" value="1"/>
</dbReference>
<dbReference type="InterPro" id="IPR036005">
    <property type="entry name" value="Creatinase/aminopeptidase-like"/>
</dbReference>
<dbReference type="InterPro" id="IPR050247">
    <property type="entry name" value="Met_Aminopeptidase_Type2"/>
</dbReference>
<dbReference type="InterPro" id="IPR000994">
    <property type="entry name" value="Pept_M24"/>
</dbReference>
<dbReference type="InterPro" id="IPR001714">
    <property type="entry name" value="Pept_M24_MAP"/>
</dbReference>
<dbReference type="InterPro" id="IPR002468">
    <property type="entry name" value="Pept_M24A_MAP2"/>
</dbReference>
<dbReference type="InterPro" id="IPR018349">
    <property type="entry name" value="Pept_M24A_MAP2_BS"/>
</dbReference>
<dbReference type="InterPro" id="IPR036388">
    <property type="entry name" value="WH-like_DNA-bd_sf"/>
</dbReference>
<dbReference type="InterPro" id="IPR036390">
    <property type="entry name" value="WH_DNA-bd_sf"/>
</dbReference>
<dbReference type="NCBIfam" id="TIGR00501">
    <property type="entry name" value="met_pdase_II"/>
    <property type="match status" value="1"/>
</dbReference>
<dbReference type="PANTHER" id="PTHR45777">
    <property type="entry name" value="METHIONINE AMINOPEPTIDASE 2"/>
    <property type="match status" value="1"/>
</dbReference>
<dbReference type="PANTHER" id="PTHR45777:SF1">
    <property type="entry name" value="METHIONINE AMINOPEPTIDASE 2-2"/>
    <property type="match status" value="1"/>
</dbReference>
<dbReference type="Pfam" id="PF00557">
    <property type="entry name" value="Peptidase_M24"/>
    <property type="match status" value="1"/>
</dbReference>
<dbReference type="PRINTS" id="PR00599">
    <property type="entry name" value="MAPEPTIDASE"/>
</dbReference>
<dbReference type="SUPFAM" id="SSF55920">
    <property type="entry name" value="Creatinase/aminopeptidase"/>
    <property type="match status" value="1"/>
</dbReference>
<dbReference type="SUPFAM" id="SSF46785">
    <property type="entry name" value="Winged helix' DNA-binding domain"/>
    <property type="match status" value="1"/>
</dbReference>
<dbReference type="PROSITE" id="PS01202">
    <property type="entry name" value="MAP_2"/>
    <property type="match status" value="1"/>
</dbReference>
<name>MAP22_NEOFI</name>
<feature type="chain" id="PRO_0000407639" description="Methionine aminopeptidase 2-2">
    <location>
        <begin position="1"/>
        <end position="463"/>
    </location>
</feature>
<feature type="region of interest" description="Disordered" evidence="2">
    <location>
        <begin position="1"/>
        <end position="97"/>
    </location>
</feature>
<feature type="compositionally biased region" description="Polar residues" evidence="2">
    <location>
        <begin position="27"/>
        <end position="36"/>
    </location>
</feature>
<feature type="compositionally biased region" description="Acidic residues" evidence="2">
    <location>
        <begin position="46"/>
        <end position="57"/>
    </location>
</feature>
<feature type="compositionally biased region" description="Basic residues" evidence="2">
    <location>
        <begin position="69"/>
        <end position="85"/>
    </location>
</feature>
<feature type="compositionally biased region" description="Polar residues" evidence="2">
    <location>
        <begin position="86"/>
        <end position="97"/>
    </location>
</feature>
<feature type="binding site" evidence="1">
    <location>
        <position position="215"/>
    </location>
    <ligand>
        <name>substrate</name>
    </ligand>
</feature>
<feature type="binding site" evidence="1">
    <location>
        <position position="236"/>
    </location>
    <ligand>
        <name>a divalent metal cation</name>
        <dbReference type="ChEBI" id="CHEBI:60240"/>
        <label>1</label>
    </ligand>
</feature>
<feature type="binding site" evidence="1">
    <location>
        <position position="247"/>
    </location>
    <ligand>
        <name>a divalent metal cation</name>
        <dbReference type="ChEBI" id="CHEBI:60240"/>
        <label>1</label>
    </ligand>
</feature>
<feature type="binding site" evidence="1">
    <location>
        <position position="247"/>
    </location>
    <ligand>
        <name>a divalent metal cation</name>
        <dbReference type="ChEBI" id="CHEBI:60240"/>
        <label>2</label>
        <note>catalytic</note>
    </ligand>
</feature>
<feature type="binding site" evidence="1">
    <location>
        <position position="316"/>
    </location>
    <ligand>
        <name>a divalent metal cation</name>
        <dbReference type="ChEBI" id="CHEBI:60240"/>
        <label>2</label>
        <note>catalytic</note>
    </ligand>
</feature>
<feature type="binding site" evidence="1">
    <location>
        <position position="324"/>
    </location>
    <ligand>
        <name>substrate</name>
    </ligand>
</feature>
<feature type="binding site" evidence="1">
    <location>
        <position position="349"/>
    </location>
    <ligand>
        <name>a divalent metal cation</name>
        <dbReference type="ChEBI" id="CHEBI:60240"/>
        <label>2</label>
        <note>catalytic</note>
    </ligand>
</feature>
<feature type="binding site" evidence="1">
    <location>
        <position position="444"/>
    </location>
    <ligand>
        <name>a divalent metal cation</name>
        <dbReference type="ChEBI" id="CHEBI:60240"/>
        <label>1</label>
    </ligand>
</feature>
<feature type="binding site" evidence="1">
    <location>
        <position position="444"/>
    </location>
    <ligand>
        <name>a divalent metal cation</name>
        <dbReference type="ChEBI" id="CHEBI:60240"/>
        <label>2</label>
        <note>catalytic</note>
    </ligand>
</feature>
<evidence type="ECO:0000255" key="1">
    <source>
        <dbReference type="HAMAP-Rule" id="MF_03175"/>
    </source>
</evidence>
<evidence type="ECO:0000256" key="2">
    <source>
        <dbReference type="SAM" id="MobiDB-lite"/>
    </source>
</evidence>